<evidence type="ECO:0000269" key="1">
    <source>
    </source>
</evidence>
<evidence type="ECO:0000303" key="2">
    <source>
    </source>
</evidence>
<evidence type="ECO:0000305" key="3"/>
<sequence>MCRFVDAIKSLLDESDITTLVALANRLSPFRVDYRRVVVGDALSVKPILVLEHEQPPCDGAWRSAAHINLGLGAAQQQHHPVPTRAVHGAAVGGVQCDGLASPPVSNNVMSDGTVDGDDDDLGYDQDTLYNQGTDYENEGGAVGQDGLPAPDAGLFQECMFSHRSASTPRAGGHGESYCQEVAQSSHAITCRELLERCILPNFEINHLENCESSTSGGIHHCLPDEHSGMTGLARNTPSASPVENSITVELDGALEIATDVRTGKFNTLRAAKRHRRNTSSLRLSSHDAGCVGDARSSAGVVKSPARRSTAVSDAALRKVKYAARTCIRADYFQFLEANLPRWVRDGIWGKEWSPNQTANVDGYENLQKAYWHVCRLDRQMRDDAIRSRMAMVLLHLEYENTCLSWKTCAHSGKKPVTKVGRGNISSLIDNIIENTHPEWRTADPGERSELRAKFHDRKRYGKRWWMLVKPLGSSILMLCSSKFAGMIKNTTVTAAMINEIKLAIQRSETGLMSLLSLANPIAESLFLDQGYDGHNAEQVLKALRAARLEVAPGEGVA</sequence>
<name>AURF_CALAK</name>
<proteinExistence type="inferred from homology"/>
<accession>A0A0M4LAF6</accession>
<reference key="1">
    <citation type="journal article" date="2015" name="J. Am. Chem. Soc.">
        <title>Efficient biosynthesis of fungal polyketides containing the dioxabicyclo-octane ring system.</title>
        <authorList>
            <person name="Mao X.M."/>
            <person name="Zhan Z.J."/>
            <person name="Grayson M.N."/>
            <person name="Tang M.C."/>
            <person name="Xu W."/>
            <person name="Li Y.Q."/>
            <person name="Yin W.B."/>
            <person name="Lin H.C."/>
            <person name="Chooi Y.H."/>
            <person name="Houk K.N."/>
            <person name="Tang Y."/>
        </authorList>
    </citation>
    <scope>NUCLEOTIDE SEQUENCE [GENOMIC DNA]</scope>
    <scope>FUNCTION</scope>
    <scope>DISRUPTION PHENOTYPE</scope>
</reference>
<comment type="function">
    <text evidence="1">Transcription factor that regulates the expression of the gene cluster that mediates the biosynthesis of aurovertins, fungal polyketides that exhibit potent inhibition of adenosine triphosphate synthase (PubMed:26340065).</text>
</comment>
<comment type="subcellular location">
    <subcellularLocation>
        <location evidence="3">Nucleus</location>
    </subcellularLocation>
</comment>
<comment type="disruption phenotype">
    <text evidence="1">Blocks the expression of the aurovertin gene cluster and impairs the production of aurovertins (PubMed:26340065).</text>
</comment>
<comment type="similarity">
    <text evidence="3">Belongs to the POU transcription factor family. Class-3 subfamily.</text>
</comment>
<feature type="chain" id="PRO_0000443970" description="Aurovertin biosynthesis cluster transcription factor aurF">
    <location>
        <begin position="1"/>
        <end position="558"/>
    </location>
</feature>
<dbReference type="EMBL" id="KT581579">
    <property type="protein sequence ID" value="ALD83632.1"/>
    <property type="molecule type" value="Genomic_DNA"/>
</dbReference>
<dbReference type="GO" id="GO:0005634">
    <property type="term" value="C:nucleus"/>
    <property type="evidence" value="ECO:0007669"/>
    <property type="project" value="UniProtKB-SubCell"/>
</dbReference>
<organism>
    <name type="scientific">Calcarisporium arbuscula</name>
    <name type="common">Dendryphion arbuscula</name>
    <dbReference type="NCBI Taxonomy" id="240499"/>
    <lineage>
        <taxon>Eukaryota</taxon>
        <taxon>Fungi</taxon>
        <taxon>Dikarya</taxon>
        <taxon>Ascomycota</taxon>
        <taxon>Pezizomycotina</taxon>
        <taxon>Sordariomycetes</taxon>
        <taxon>Hypocreomycetidae</taxon>
        <taxon>Hypocreales</taxon>
        <taxon>Hypocreales incertae sedis</taxon>
        <taxon>Calcarisporium</taxon>
    </lineage>
</organism>
<keyword id="KW-0539">Nucleus</keyword>
<keyword id="KW-0804">Transcription</keyword>
<keyword id="KW-0805">Transcription regulation</keyword>
<gene>
    <name evidence="2" type="primary">aurF</name>
</gene>
<protein>
    <recommendedName>
        <fullName evidence="2">Aurovertin biosynthesis cluster transcription factor aurF</fullName>
    </recommendedName>
    <alternativeName>
        <fullName evidence="2">Aurovertin biosynthesis cluster protein F</fullName>
    </alternativeName>
</protein>